<proteinExistence type="inferred from homology"/>
<feature type="chain" id="PRO_0000242797" description="Thymidine kinase">
    <location>
        <begin position="1"/>
        <end position="184"/>
    </location>
</feature>
<feature type="active site" description="Proton acceptor" evidence="1">
    <location>
        <position position="90"/>
    </location>
</feature>
<feature type="binding site" evidence="1">
    <location>
        <begin position="15"/>
        <end position="22"/>
    </location>
    <ligand>
        <name>ATP</name>
        <dbReference type="ChEBI" id="CHEBI:30616"/>
    </ligand>
</feature>
<feature type="binding site" evidence="1">
    <location>
        <begin position="89"/>
        <end position="92"/>
    </location>
    <ligand>
        <name>ATP</name>
        <dbReference type="ChEBI" id="CHEBI:30616"/>
    </ligand>
</feature>
<feature type="binding site" evidence="1">
    <location>
        <position position="146"/>
    </location>
    <ligand>
        <name>Zn(2+)</name>
        <dbReference type="ChEBI" id="CHEBI:29105"/>
    </ligand>
</feature>
<feature type="binding site" evidence="1">
    <location>
        <position position="149"/>
    </location>
    <ligand>
        <name>Zn(2+)</name>
        <dbReference type="ChEBI" id="CHEBI:29105"/>
    </ligand>
</feature>
<feature type="binding site" evidence="1">
    <location>
        <position position="178"/>
    </location>
    <ligand>
        <name>Zn(2+)</name>
        <dbReference type="ChEBI" id="CHEBI:29105"/>
    </ligand>
</feature>
<feature type="binding site" evidence="1">
    <location>
        <position position="181"/>
    </location>
    <ligand>
        <name>Zn(2+)</name>
        <dbReference type="ChEBI" id="CHEBI:29105"/>
    </ligand>
</feature>
<comment type="catalytic activity">
    <reaction evidence="1">
        <text>thymidine + ATP = dTMP + ADP + H(+)</text>
        <dbReference type="Rhea" id="RHEA:19129"/>
        <dbReference type="ChEBI" id="CHEBI:15378"/>
        <dbReference type="ChEBI" id="CHEBI:17748"/>
        <dbReference type="ChEBI" id="CHEBI:30616"/>
        <dbReference type="ChEBI" id="CHEBI:63528"/>
        <dbReference type="ChEBI" id="CHEBI:456216"/>
        <dbReference type="EC" id="2.7.1.21"/>
    </reaction>
</comment>
<comment type="subunit">
    <text evidence="1">Homotetramer.</text>
</comment>
<comment type="subcellular location">
    <subcellularLocation>
        <location evidence="1">Cytoplasm</location>
    </subcellularLocation>
</comment>
<comment type="similarity">
    <text evidence="1">Belongs to the thymidine kinase family.</text>
</comment>
<evidence type="ECO:0000255" key="1">
    <source>
        <dbReference type="HAMAP-Rule" id="MF_00124"/>
    </source>
</evidence>
<keyword id="KW-0067">ATP-binding</keyword>
<keyword id="KW-0963">Cytoplasm</keyword>
<keyword id="KW-0237">DNA synthesis</keyword>
<keyword id="KW-0418">Kinase</keyword>
<keyword id="KW-0479">Metal-binding</keyword>
<keyword id="KW-0547">Nucleotide-binding</keyword>
<keyword id="KW-0808">Transferase</keyword>
<keyword id="KW-0862">Zinc</keyword>
<sequence>MYKKFFDGVIEVITGPMFSGKSDELIKRIKILTYADIKTLVIKPSVDYRFSQCEIVSRSGLKIPTFLARTTQEIRDLFTRDNYQAIAIDEIQFFDEEIVTFLEQIADKGIRVIVSGLDQDFRRKPFGSLPNLMAIAENVTKLQAVCSLCKRAATTTARKVLNEAQTLIGDQDEYEARCRACHSL</sequence>
<reference key="1">
    <citation type="journal article" date="2005" name="J. Bacteriol.">
        <title>Swine and poultry pathogens: the complete genome sequences of two strains of Mycoplasma hyopneumoniae and a strain of Mycoplasma synoviae.</title>
        <authorList>
            <person name="Vasconcelos A.T.R."/>
            <person name="Ferreira H.B."/>
            <person name="Bizarro C.V."/>
            <person name="Bonatto S.L."/>
            <person name="Carvalho M.O."/>
            <person name="Pinto P.M."/>
            <person name="Almeida D.F."/>
            <person name="Almeida L.G.P."/>
            <person name="Almeida R."/>
            <person name="Alves-Junior L."/>
            <person name="Assuncao E.N."/>
            <person name="Azevedo V.A.C."/>
            <person name="Bogo M.R."/>
            <person name="Brigido M.M."/>
            <person name="Brocchi M."/>
            <person name="Burity H.A."/>
            <person name="Camargo A.A."/>
            <person name="Camargo S.S."/>
            <person name="Carepo M.S."/>
            <person name="Carraro D.M."/>
            <person name="de Mattos Cascardo J.C."/>
            <person name="Castro L.A."/>
            <person name="Cavalcanti G."/>
            <person name="Chemale G."/>
            <person name="Collevatti R.G."/>
            <person name="Cunha C.W."/>
            <person name="Dallagiovanna B."/>
            <person name="Dambros B.P."/>
            <person name="Dellagostin O.A."/>
            <person name="Falcao C."/>
            <person name="Fantinatti-Garboggini F."/>
            <person name="Felipe M.S.S."/>
            <person name="Fiorentin L."/>
            <person name="Franco G.R."/>
            <person name="Freitas N.S.A."/>
            <person name="Frias D."/>
            <person name="Grangeiro T.B."/>
            <person name="Grisard E.C."/>
            <person name="Guimaraes C.T."/>
            <person name="Hungria M."/>
            <person name="Jardim S.N."/>
            <person name="Krieger M.A."/>
            <person name="Laurino J.P."/>
            <person name="Lima L.F.A."/>
            <person name="Lopes M.I."/>
            <person name="Loreto E.L.S."/>
            <person name="Madeira H.M.F."/>
            <person name="Manfio G.P."/>
            <person name="Maranhao A.Q."/>
            <person name="Martinkovics C.T."/>
            <person name="Medeiros S.R.B."/>
            <person name="Moreira M.A.M."/>
            <person name="Neiva M."/>
            <person name="Ramalho-Neto C.E."/>
            <person name="Nicolas M.F."/>
            <person name="Oliveira S.C."/>
            <person name="Paixao R.F.C."/>
            <person name="Pedrosa F.O."/>
            <person name="Pena S.D.J."/>
            <person name="Pereira M."/>
            <person name="Pereira-Ferrari L."/>
            <person name="Piffer I."/>
            <person name="Pinto L.S."/>
            <person name="Potrich D.P."/>
            <person name="Salim A.C.M."/>
            <person name="Santos F.R."/>
            <person name="Schmitt R."/>
            <person name="Schneider M.P.C."/>
            <person name="Schrank A."/>
            <person name="Schrank I.S."/>
            <person name="Schuck A.F."/>
            <person name="Seuanez H.N."/>
            <person name="Silva D.W."/>
            <person name="Silva R."/>
            <person name="Silva S.C."/>
            <person name="Soares C.M.A."/>
            <person name="Souza K.R.L."/>
            <person name="Souza R.C."/>
            <person name="Staats C.C."/>
            <person name="Steffens M.B.R."/>
            <person name="Teixeira S.M.R."/>
            <person name="Urmenyi T.P."/>
            <person name="Vainstein M.H."/>
            <person name="Zuccherato L.W."/>
            <person name="Simpson A.J.G."/>
            <person name="Zaha A."/>
        </authorList>
    </citation>
    <scope>NUCLEOTIDE SEQUENCE [LARGE SCALE GENOMIC DNA]</scope>
    <source>
        <strain>J / ATCC 25934 / NCTC 10110</strain>
    </source>
</reference>
<accession>Q4A977</accession>
<protein>
    <recommendedName>
        <fullName evidence="1">Thymidine kinase</fullName>
        <ecNumber evidence="1">2.7.1.21</ecNumber>
    </recommendedName>
</protein>
<organism>
    <name type="scientific">Mesomycoplasma hyopneumoniae (strain J / ATCC 25934 / NCTC 10110)</name>
    <name type="common">Mycoplasma hyopneumoniae</name>
    <dbReference type="NCBI Taxonomy" id="262719"/>
    <lineage>
        <taxon>Bacteria</taxon>
        <taxon>Bacillati</taxon>
        <taxon>Mycoplasmatota</taxon>
        <taxon>Mycoplasmoidales</taxon>
        <taxon>Metamycoplasmataceae</taxon>
        <taxon>Mesomycoplasma</taxon>
    </lineage>
</organism>
<name>KITH_MESHJ</name>
<gene>
    <name evidence="1" type="primary">tdk</name>
    <name type="ordered locus">MHJ_0610</name>
</gene>
<dbReference type="EC" id="2.7.1.21" evidence="1"/>
<dbReference type="EMBL" id="AE017243">
    <property type="protein sequence ID" value="AAZ44694.1"/>
    <property type="molecule type" value="Genomic_DNA"/>
</dbReference>
<dbReference type="RefSeq" id="WP_011206458.1">
    <property type="nucleotide sequence ID" value="NC_007295.1"/>
</dbReference>
<dbReference type="SMR" id="Q4A977"/>
<dbReference type="GeneID" id="41334911"/>
<dbReference type="KEGG" id="mhj:MHJ_0610"/>
<dbReference type="eggNOG" id="COG1435">
    <property type="taxonomic scope" value="Bacteria"/>
</dbReference>
<dbReference type="HOGENOM" id="CLU_064400_3_0_14"/>
<dbReference type="OrthoDB" id="9781579at2"/>
<dbReference type="Proteomes" id="UP000000548">
    <property type="component" value="Chromosome"/>
</dbReference>
<dbReference type="GO" id="GO:0005737">
    <property type="term" value="C:cytoplasm"/>
    <property type="evidence" value="ECO:0007669"/>
    <property type="project" value="UniProtKB-SubCell"/>
</dbReference>
<dbReference type="GO" id="GO:0005524">
    <property type="term" value="F:ATP binding"/>
    <property type="evidence" value="ECO:0007669"/>
    <property type="project" value="UniProtKB-UniRule"/>
</dbReference>
<dbReference type="GO" id="GO:0004797">
    <property type="term" value="F:thymidine kinase activity"/>
    <property type="evidence" value="ECO:0007669"/>
    <property type="project" value="UniProtKB-UniRule"/>
</dbReference>
<dbReference type="GO" id="GO:0008270">
    <property type="term" value="F:zinc ion binding"/>
    <property type="evidence" value="ECO:0007669"/>
    <property type="project" value="UniProtKB-UniRule"/>
</dbReference>
<dbReference type="GO" id="GO:0071897">
    <property type="term" value="P:DNA biosynthetic process"/>
    <property type="evidence" value="ECO:0007669"/>
    <property type="project" value="UniProtKB-KW"/>
</dbReference>
<dbReference type="GO" id="GO:0046104">
    <property type="term" value="P:thymidine metabolic process"/>
    <property type="evidence" value="ECO:0007669"/>
    <property type="project" value="TreeGrafter"/>
</dbReference>
<dbReference type="Gene3D" id="3.30.60.20">
    <property type="match status" value="1"/>
</dbReference>
<dbReference type="Gene3D" id="3.40.50.300">
    <property type="entry name" value="P-loop containing nucleotide triphosphate hydrolases"/>
    <property type="match status" value="1"/>
</dbReference>
<dbReference type="HAMAP" id="MF_00124">
    <property type="entry name" value="Thymidine_kinase"/>
    <property type="match status" value="1"/>
</dbReference>
<dbReference type="InterPro" id="IPR027417">
    <property type="entry name" value="P-loop_NTPase"/>
</dbReference>
<dbReference type="InterPro" id="IPR001267">
    <property type="entry name" value="Thymidine_kinase"/>
</dbReference>
<dbReference type="InterPro" id="IPR020633">
    <property type="entry name" value="Thymidine_kinase_CS"/>
</dbReference>
<dbReference type="NCBIfam" id="NF003296">
    <property type="entry name" value="PRK04296.1-1"/>
    <property type="match status" value="1"/>
</dbReference>
<dbReference type="PANTHER" id="PTHR11441">
    <property type="entry name" value="THYMIDINE KINASE"/>
    <property type="match status" value="1"/>
</dbReference>
<dbReference type="PANTHER" id="PTHR11441:SF0">
    <property type="entry name" value="THYMIDINE KINASE, CYTOSOLIC"/>
    <property type="match status" value="1"/>
</dbReference>
<dbReference type="Pfam" id="PF00265">
    <property type="entry name" value="TK"/>
    <property type="match status" value="1"/>
</dbReference>
<dbReference type="PIRSF" id="PIRSF035805">
    <property type="entry name" value="TK_cell"/>
    <property type="match status" value="1"/>
</dbReference>
<dbReference type="SUPFAM" id="SSF57716">
    <property type="entry name" value="Glucocorticoid receptor-like (DNA-binding domain)"/>
    <property type="match status" value="1"/>
</dbReference>
<dbReference type="SUPFAM" id="SSF52540">
    <property type="entry name" value="P-loop containing nucleoside triphosphate hydrolases"/>
    <property type="match status" value="1"/>
</dbReference>
<dbReference type="PROSITE" id="PS00603">
    <property type="entry name" value="TK_CELLULAR_TYPE"/>
    <property type="match status" value="1"/>
</dbReference>